<reference key="1">
    <citation type="journal article" date="2008" name="PLoS ONE">
        <title>Genome sequence of a lancefield group C Streptococcus zooepidemicus strain causing epidemic nephritis: new information about an old disease.</title>
        <authorList>
            <person name="Beres S.B."/>
            <person name="Sesso R."/>
            <person name="Pinto S.W.L."/>
            <person name="Hoe N.P."/>
            <person name="Porcella S.F."/>
            <person name="Deleo F.R."/>
            <person name="Musser J.M."/>
        </authorList>
    </citation>
    <scope>NUCLEOTIDE SEQUENCE [LARGE SCALE GENOMIC DNA]</scope>
    <source>
        <strain>MGCS10565</strain>
    </source>
</reference>
<accession>B4U1F8</accession>
<feature type="chain" id="PRO_1000147081" description="Galactose-6-phosphate isomerase subunit LacA">
    <location>
        <begin position="1"/>
        <end position="141"/>
    </location>
</feature>
<name>LACA_STREM</name>
<organism>
    <name type="scientific">Streptococcus equi subsp. zooepidemicus (strain MGCS10565)</name>
    <dbReference type="NCBI Taxonomy" id="552526"/>
    <lineage>
        <taxon>Bacteria</taxon>
        <taxon>Bacillati</taxon>
        <taxon>Bacillota</taxon>
        <taxon>Bacilli</taxon>
        <taxon>Lactobacillales</taxon>
        <taxon>Streptococcaceae</taxon>
        <taxon>Streptococcus</taxon>
    </lineage>
</organism>
<comment type="catalytic activity">
    <reaction evidence="1">
        <text>aldehydo-D-galactose 6-phosphate = keto-D-tagatose 6-phosphate</text>
        <dbReference type="Rhea" id="RHEA:13033"/>
        <dbReference type="ChEBI" id="CHEBI:58255"/>
        <dbReference type="ChEBI" id="CHEBI:134283"/>
        <dbReference type="EC" id="5.3.1.26"/>
    </reaction>
</comment>
<comment type="pathway">
    <text evidence="1">Carbohydrate metabolism; D-galactose 6-phosphate degradation; D-tagatose 6-phosphate from D-galactose 6-phosphate: step 1/1.</text>
</comment>
<comment type="subunit">
    <text evidence="1">Heteromultimeric protein consisting of LacA and LacB.</text>
</comment>
<comment type="similarity">
    <text evidence="1">Belongs to the LacAB/RpiB family.</text>
</comment>
<sequence>MAIILGADAHGNELKEVLKSFLQQEGFDVTDVTDIDKDFIDNTLAVAQAVNDKDTNLGIMVDAYGAGPFMVATKLKGMIAAEVSDERSAYMTRGHNNARMITLGARIVGEELAKNIAKAFVVGSYDGGRHQIRVDMLNKMA</sequence>
<protein>
    <recommendedName>
        <fullName evidence="1">Galactose-6-phosphate isomerase subunit LacA</fullName>
        <ecNumber evidence="1">5.3.1.26</ecNumber>
    </recommendedName>
</protein>
<gene>
    <name evidence="1" type="primary">lacA</name>
    <name type="ordered locus">Sez_0453</name>
</gene>
<evidence type="ECO:0000255" key="1">
    <source>
        <dbReference type="HAMAP-Rule" id="MF_01555"/>
    </source>
</evidence>
<dbReference type="EC" id="5.3.1.26" evidence="1"/>
<dbReference type="EMBL" id="CP001129">
    <property type="protein sequence ID" value="ACG61825.1"/>
    <property type="molecule type" value="Genomic_DNA"/>
</dbReference>
<dbReference type="RefSeq" id="WP_012515101.1">
    <property type="nucleotide sequence ID" value="NC_011134.1"/>
</dbReference>
<dbReference type="SMR" id="B4U1F8"/>
<dbReference type="GeneID" id="83704329"/>
<dbReference type="KEGG" id="sez:Sez_0453"/>
<dbReference type="HOGENOM" id="CLU_091396_4_2_9"/>
<dbReference type="UniPathway" id="UPA00702">
    <property type="reaction ID" value="UER00714"/>
</dbReference>
<dbReference type="Proteomes" id="UP000001873">
    <property type="component" value="Chromosome"/>
</dbReference>
<dbReference type="GO" id="GO:0050044">
    <property type="term" value="F:galactose-6-phosphate isomerase activity"/>
    <property type="evidence" value="ECO:0007669"/>
    <property type="project" value="UniProtKB-UniRule"/>
</dbReference>
<dbReference type="GO" id="GO:0004751">
    <property type="term" value="F:ribose-5-phosphate isomerase activity"/>
    <property type="evidence" value="ECO:0007669"/>
    <property type="project" value="TreeGrafter"/>
</dbReference>
<dbReference type="GO" id="GO:0019316">
    <property type="term" value="P:D-allose catabolic process"/>
    <property type="evidence" value="ECO:0007669"/>
    <property type="project" value="TreeGrafter"/>
</dbReference>
<dbReference type="GO" id="GO:0019388">
    <property type="term" value="P:galactose catabolic process"/>
    <property type="evidence" value="ECO:0007669"/>
    <property type="project" value="UniProtKB-UniPathway"/>
</dbReference>
<dbReference type="GO" id="GO:0019512">
    <property type="term" value="P:lactose catabolic process via tagatose-6-phosphate"/>
    <property type="evidence" value="ECO:0007669"/>
    <property type="project" value="UniProtKB-UniRule"/>
</dbReference>
<dbReference type="GO" id="GO:0009052">
    <property type="term" value="P:pentose-phosphate shunt, non-oxidative branch"/>
    <property type="evidence" value="ECO:0007669"/>
    <property type="project" value="TreeGrafter"/>
</dbReference>
<dbReference type="Gene3D" id="3.40.1400.10">
    <property type="entry name" value="Sugar-phosphate isomerase, RpiB/LacA/LacB"/>
    <property type="match status" value="1"/>
</dbReference>
<dbReference type="HAMAP" id="MF_01555">
    <property type="entry name" value="LacA"/>
    <property type="match status" value="1"/>
</dbReference>
<dbReference type="InterPro" id="IPR004783">
    <property type="entry name" value="LacA"/>
</dbReference>
<dbReference type="InterPro" id="IPR003500">
    <property type="entry name" value="RpiB_LacA_LacB"/>
</dbReference>
<dbReference type="InterPro" id="IPR036569">
    <property type="entry name" value="RpiB_LacA_LacB_sf"/>
</dbReference>
<dbReference type="NCBIfam" id="TIGR01118">
    <property type="entry name" value="lacA"/>
    <property type="match status" value="1"/>
</dbReference>
<dbReference type="NCBIfam" id="NF006380">
    <property type="entry name" value="PRK08621.1"/>
    <property type="match status" value="1"/>
</dbReference>
<dbReference type="NCBIfam" id="NF009257">
    <property type="entry name" value="PRK12613.1"/>
    <property type="match status" value="1"/>
</dbReference>
<dbReference type="NCBIfam" id="TIGR00689">
    <property type="entry name" value="rpiB_lacA_lacB"/>
    <property type="match status" value="1"/>
</dbReference>
<dbReference type="PANTHER" id="PTHR30345:SF5">
    <property type="entry name" value="GALACTOSE-6-PHOSPHATE ISOMERASE SUBUNIT LACA"/>
    <property type="match status" value="1"/>
</dbReference>
<dbReference type="PANTHER" id="PTHR30345">
    <property type="entry name" value="RIBOSE-5-PHOSPHATE ISOMERASE B"/>
    <property type="match status" value="1"/>
</dbReference>
<dbReference type="Pfam" id="PF02502">
    <property type="entry name" value="LacAB_rpiB"/>
    <property type="match status" value="1"/>
</dbReference>
<dbReference type="PIRSF" id="PIRSF005384">
    <property type="entry name" value="RpiB_LacA_B"/>
    <property type="match status" value="1"/>
</dbReference>
<dbReference type="SUPFAM" id="SSF89623">
    <property type="entry name" value="Ribose/Galactose isomerase RpiB/AlsB"/>
    <property type="match status" value="1"/>
</dbReference>
<proteinExistence type="inferred from homology"/>
<keyword id="KW-0413">Isomerase</keyword>
<keyword id="KW-0423">Lactose metabolism</keyword>